<comment type="function">
    <text evidence="1">Catalyzes the reversible reaction in which hydroxymethyl group from 5,10-methylenetetrahydrofolate is transferred onto alpha-ketoisovalerate to form ketopantoate.</text>
</comment>
<comment type="catalytic activity">
    <reaction evidence="1">
        <text>3-methyl-2-oxobutanoate + (6R)-5,10-methylene-5,6,7,8-tetrahydrofolate + H2O = 2-dehydropantoate + (6S)-5,6,7,8-tetrahydrofolate</text>
        <dbReference type="Rhea" id="RHEA:11824"/>
        <dbReference type="ChEBI" id="CHEBI:11561"/>
        <dbReference type="ChEBI" id="CHEBI:11851"/>
        <dbReference type="ChEBI" id="CHEBI:15377"/>
        <dbReference type="ChEBI" id="CHEBI:15636"/>
        <dbReference type="ChEBI" id="CHEBI:57453"/>
        <dbReference type="EC" id="2.1.2.11"/>
    </reaction>
</comment>
<comment type="cofactor">
    <cofactor evidence="1">
        <name>Mg(2+)</name>
        <dbReference type="ChEBI" id="CHEBI:18420"/>
    </cofactor>
    <text evidence="1">Binds 1 Mg(2+) ion per subunit.</text>
</comment>
<comment type="pathway">
    <text evidence="1">Cofactor biosynthesis; (R)-pantothenate biosynthesis; (R)-pantoate from 3-methyl-2-oxobutanoate: step 1/2.</text>
</comment>
<comment type="subunit">
    <text evidence="1">Homodecamer; pentamer of dimers.</text>
</comment>
<comment type="subcellular location">
    <subcellularLocation>
        <location evidence="1">Cytoplasm</location>
    </subcellularLocation>
</comment>
<comment type="similarity">
    <text evidence="1">Belongs to the PanB family.</text>
</comment>
<comment type="sequence caution" evidence="2">
    <conflict type="erroneous initiation">
        <sequence resource="EMBL-CDS" id="AAS80387"/>
    </conflict>
</comment>
<sequence>MRRTVKDFRNAKGQRLVYLTAYDYPTARLAEAAGVDAILVGDSLGMVVLGYPSTVPVTLEEMLHHTKAARRGAPETFLVADLPYLAYATLDRALLAAERLLKEGGADAVKLEGGEEVAEIVRGLVRAGVPVLGHVGLTPQTASQLGGYKLQGRRPEEAERILKGALALEEAGAYGVVLEMVPARLAKEVTERLSVHTVGIGAGPHTDAQVLVFHDVVGLYGDFKPRFVKRYLEAGRLIQEALSRYAQEVREGVFPGEEHSF</sequence>
<reference key="1">
    <citation type="journal article" date="2004" name="Nat. Biotechnol.">
        <title>The genome sequence of the extreme thermophile Thermus thermophilus.</title>
        <authorList>
            <person name="Henne A."/>
            <person name="Brueggemann H."/>
            <person name="Raasch C."/>
            <person name="Wiezer A."/>
            <person name="Hartsch T."/>
            <person name="Liesegang H."/>
            <person name="Johann A."/>
            <person name="Lienard T."/>
            <person name="Gohl O."/>
            <person name="Martinez-Arias R."/>
            <person name="Jacobi C."/>
            <person name="Starkuviene V."/>
            <person name="Schlenczeck S."/>
            <person name="Dencker S."/>
            <person name="Huber R."/>
            <person name="Klenk H.-P."/>
            <person name="Kramer W."/>
            <person name="Merkl R."/>
            <person name="Gottschalk G."/>
            <person name="Fritz H.-J."/>
        </authorList>
    </citation>
    <scope>NUCLEOTIDE SEQUENCE [LARGE SCALE GENOMIC DNA]</scope>
    <source>
        <strain>ATCC BAA-163 / DSM 7039 / HB27</strain>
    </source>
</reference>
<protein>
    <recommendedName>
        <fullName evidence="1">3-methyl-2-oxobutanoate hydroxymethyltransferase</fullName>
        <ecNumber evidence="1">2.1.2.11</ecNumber>
    </recommendedName>
    <alternativeName>
        <fullName evidence="1">Ketopantoate hydroxymethyltransferase</fullName>
        <shortName evidence="1">KPHMT</shortName>
    </alternativeName>
</protein>
<accession>Q72LM0</accession>
<evidence type="ECO:0000255" key="1">
    <source>
        <dbReference type="HAMAP-Rule" id="MF_00156"/>
    </source>
</evidence>
<evidence type="ECO:0000305" key="2"/>
<gene>
    <name evidence="1" type="primary">panB</name>
    <name type="ordered locus">TT_C0039</name>
</gene>
<organism>
    <name type="scientific">Thermus thermophilus (strain ATCC BAA-163 / DSM 7039 / HB27)</name>
    <dbReference type="NCBI Taxonomy" id="262724"/>
    <lineage>
        <taxon>Bacteria</taxon>
        <taxon>Thermotogati</taxon>
        <taxon>Deinococcota</taxon>
        <taxon>Deinococci</taxon>
        <taxon>Thermales</taxon>
        <taxon>Thermaceae</taxon>
        <taxon>Thermus</taxon>
    </lineage>
</organism>
<keyword id="KW-0963">Cytoplasm</keyword>
<keyword id="KW-0460">Magnesium</keyword>
<keyword id="KW-0479">Metal-binding</keyword>
<keyword id="KW-0566">Pantothenate biosynthesis</keyword>
<keyword id="KW-0808">Transferase</keyword>
<proteinExistence type="inferred from homology"/>
<name>PANB_THET2</name>
<feature type="chain" id="PRO_0000184902" description="3-methyl-2-oxobutanoate hydroxymethyltransferase">
    <location>
        <begin position="1"/>
        <end position="261"/>
    </location>
</feature>
<feature type="active site" description="Proton acceptor" evidence="1">
    <location>
        <position position="179"/>
    </location>
</feature>
<feature type="binding site" evidence="1">
    <location>
        <begin position="42"/>
        <end position="43"/>
    </location>
    <ligand>
        <name>3-methyl-2-oxobutanoate</name>
        <dbReference type="ChEBI" id="CHEBI:11851"/>
    </ligand>
</feature>
<feature type="binding site" evidence="1">
    <location>
        <position position="42"/>
    </location>
    <ligand>
        <name>Mg(2+)</name>
        <dbReference type="ChEBI" id="CHEBI:18420"/>
    </ligand>
</feature>
<feature type="binding site" evidence="1">
    <location>
        <position position="81"/>
    </location>
    <ligand>
        <name>3-methyl-2-oxobutanoate</name>
        <dbReference type="ChEBI" id="CHEBI:11851"/>
    </ligand>
</feature>
<feature type="binding site" evidence="1">
    <location>
        <position position="81"/>
    </location>
    <ligand>
        <name>Mg(2+)</name>
        <dbReference type="ChEBI" id="CHEBI:18420"/>
    </ligand>
</feature>
<feature type="binding site" evidence="1">
    <location>
        <position position="110"/>
    </location>
    <ligand>
        <name>3-methyl-2-oxobutanoate</name>
        <dbReference type="ChEBI" id="CHEBI:11851"/>
    </ligand>
</feature>
<feature type="binding site" evidence="1">
    <location>
        <position position="112"/>
    </location>
    <ligand>
        <name>Mg(2+)</name>
        <dbReference type="ChEBI" id="CHEBI:18420"/>
    </ligand>
</feature>
<dbReference type="EC" id="2.1.2.11" evidence="1"/>
<dbReference type="EMBL" id="AE017221">
    <property type="protein sequence ID" value="AAS80387.1"/>
    <property type="status" value="ALT_INIT"/>
    <property type="molecule type" value="Genomic_DNA"/>
</dbReference>
<dbReference type="RefSeq" id="WP_014630114.1">
    <property type="nucleotide sequence ID" value="NC_005835.1"/>
</dbReference>
<dbReference type="SMR" id="Q72LM0"/>
<dbReference type="KEGG" id="tth:TT_C0039"/>
<dbReference type="eggNOG" id="COG0413">
    <property type="taxonomic scope" value="Bacteria"/>
</dbReference>
<dbReference type="HOGENOM" id="CLU_036645_1_0_0"/>
<dbReference type="OrthoDB" id="9781789at2"/>
<dbReference type="UniPathway" id="UPA00028">
    <property type="reaction ID" value="UER00003"/>
</dbReference>
<dbReference type="Proteomes" id="UP000000592">
    <property type="component" value="Chromosome"/>
</dbReference>
<dbReference type="GO" id="GO:0005737">
    <property type="term" value="C:cytoplasm"/>
    <property type="evidence" value="ECO:0007669"/>
    <property type="project" value="UniProtKB-SubCell"/>
</dbReference>
<dbReference type="GO" id="GO:0003864">
    <property type="term" value="F:3-methyl-2-oxobutanoate hydroxymethyltransferase activity"/>
    <property type="evidence" value="ECO:0007669"/>
    <property type="project" value="UniProtKB-UniRule"/>
</dbReference>
<dbReference type="GO" id="GO:0000287">
    <property type="term" value="F:magnesium ion binding"/>
    <property type="evidence" value="ECO:0007669"/>
    <property type="project" value="TreeGrafter"/>
</dbReference>
<dbReference type="GO" id="GO:0015940">
    <property type="term" value="P:pantothenate biosynthetic process"/>
    <property type="evidence" value="ECO:0007669"/>
    <property type="project" value="UniProtKB-UniRule"/>
</dbReference>
<dbReference type="CDD" id="cd06557">
    <property type="entry name" value="KPHMT-like"/>
    <property type="match status" value="1"/>
</dbReference>
<dbReference type="FunFam" id="3.20.20.60:FF:000003">
    <property type="entry name" value="3-methyl-2-oxobutanoate hydroxymethyltransferase"/>
    <property type="match status" value="1"/>
</dbReference>
<dbReference type="Gene3D" id="3.20.20.60">
    <property type="entry name" value="Phosphoenolpyruvate-binding domains"/>
    <property type="match status" value="1"/>
</dbReference>
<dbReference type="HAMAP" id="MF_00156">
    <property type="entry name" value="PanB"/>
    <property type="match status" value="1"/>
</dbReference>
<dbReference type="InterPro" id="IPR003700">
    <property type="entry name" value="Pantoate_hydroxy_MeTrfase"/>
</dbReference>
<dbReference type="InterPro" id="IPR015813">
    <property type="entry name" value="Pyrv/PenolPyrv_kinase-like_dom"/>
</dbReference>
<dbReference type="InterPro" id="IPR040442">
    <property type="entry name" value="Pyrv_kinase-like_dom_sf"/>
</dbReference>
<dbReference type="NCBIfam" id="TIGR00222">
    <property type="entry name" value="panB"/>
    <property type="match status" value="1"/>
</dbReference>
<dbReference type="NCBIfam" id="NF001452">
    <property type="entry name" value="PRK00311.1"/>
    <property type="match status" value="1"/>
</dbReference>
<dbReference type="PANTHER" id="PTHR20881">
    <property type="entry name" value="3-METHYL-2-OXOBUTANOATE HYDROXYMETHYLTRANSFERASE"/>
    <property type="match status" value="1"/>
</dbReference>
<dbReference type="PANTHER" id="PTHR20881:SF0">
    <property type="entry name" value="3-METHYL-2-OXOBUTANOATE HYDROXYMETHYLTRANSFERASE"/>
    <property type="match status" value="1"/>
</dbReference>
<dbReference type="Pfam" id="PF02548">
    <property type="entry name" value="Pantoate_transf"/>
    <property type="match status" value="1"/>
</dbReference>
<dbReference type="PIRSF" id="PIRSF000388">
    <property type="entry name" value="Pantoate_hydroxy_MeTrfase"/>
    <property type="match status" value="1"/>
</dbReference>
<dbReference type="SUPFAM" id="SSF51621">
    <property type="entry name" value="Phosphoenolpyruvate/pyruvate domain"/>
    <property type="match status" value="1"/>
</dbReference>